<accession>Q9RRE4</accession>
<proteinExistence type="inferred from homology"/>
<reference key="1">
    <citation type="journal article" date="1999" name="Science">
        <title>Genome sequence of the radioresistant bacterium Deinococcus radiodurans R1.</title>
        <authorList>
            <person name="White O."/>
            <person name="Eisen J.A."/>
            <person name="Heidelberg J.F."/>
            <person name="Hickey E.K."/>
            <person name="Peterson J.D."/>
            <person name="Dodson R.J."/>
            <person name="Haft D.H."/>
            <person name="Gwinn M.L."/>
            <person name="Nelson W.C."/>
            <person name="Richardson D.L."/>
            <person name="Moffat K.S."/>
            <person name="Qin H."/>
            <person name="Jiang L."/>
            <person name="Pamphile W."/>
            <person name="Crosby M."/>
            <person name="Shen M."/>
            <person name="Vamathevan J.J."/>
            <person name="Lam P."/>
            <person name="McDonald L.A."/>
            <person name="Utterback T.R."/>
            <person name="Zalewski C."/>
            <person name="Makarova K.S."/>
            <person name="Aravind L."/>
            <person name="Daly M.J."/>
            <person name="Minton K.W."/>
            <person name="Fleischmann R.D."/>
            <person name="Ketchum K.A."/>
            <person name="Nelson K.E."/>
            <person name="Salzberg S.L."/>
            <person name="Smith H.O."/>
            <person name="Venter J.C."/>
            <person name="Fraser C.M."/>
        </authorList>
    </citation>
    <scope>NUCLEOTIDE SEQUENCE [LARGE SCALE GENOMIC DNA]</scope>
    <source>
        <strain>ATCC 13939 / DSM 20539 / JCM 16871 / CCUG 27074 / LMG 4051 / NBRC 15346 / NCIMB 9279 / VKM B-1422 / R1</strain>
    </source>
</reference>
<feature type="chain" id="PRO_0000175796" description="Probable transcriptional regulatory protein DR_2548">
    <location>
        <begin position="1"/>
        <end position="244"/>
    </location>
</feature>
<feature type="region of interest" description="Disordered" evidence="2">
    <location>
        <begin position="1"/>
        <end position="23"/>
    </location>
</feature>
<comment type="subcellular location">
    <subcellularLocation>
        <location evidence="1">Cytoplasm</location>
    </subcellularLocation>
</comment>
<comment type="similarity">
    <text evidence="1">Belongs to the TACO1 family.</text>
</comment>
<name>Y2548_DEIRA</name>
<sequence>MAGHSKWAQIKRKKGANDKKRSAMYSKHIRAIQAAVRSGGSGDPAGNLSLKNAIAAAKTDTVPADNIENAIKRAVGAGEGAAEYKEQTYEGYGPGGTAIFIETLTDNVNRTVADIRAVFNKRGGSMGNSGSVAWQFEKKGIILLRDASEAAQEVAIENGAEDIQESDEGLEISTAPNDLYAVQDALSAAGYAVESGQITMLPTNTVAVAGDDARKLLTLVEYLEELDDVQNVYTNADLPEDEED</sequence>
<organism>
    <name type="scientific">Deinococcus radiodurans (strain ATCC 13939 / DSM 20539 / JCM 16871 / CCUG 27074 / LMG 4051 / NBRC 15346 / NCIMB 9279 / VKM B-1422 / R1)</name>
    <dbReference type="NCBI Taxonomy" id="243230"/>
    <lineage>
        <taxon>Bacteria</taxon>
        <taxon>Thermotogati</taxon>
        <taxon>Deinococcota</taxon>
        <taxon>Deinococci</taxon>
        <taxon>Deinococcales</taxon>
        <taxon>Deinococcaceae</taxon>
        <taxon>Deinococcus</taxon>
    </lineage>
</organism>
<dbReference type="EMBL" id="AE000513">
    <property type="protein sequence ID" value="AAF12089.1"/>
    <property type="molecule type" value="Genomic_DNA"/>
</dbReference>
<dbReference type="PIR" id="G75259">
    <property type="entry name" value="G75259"/>
</dbReference>
<dbReference type="RefSeq" id="NP_296268.1">
    <property type="nucleotide sequence ID" value="NC_001263.1"/>
</dbReference>
<dbReference type="RefSeq" id="WP_010889173.1">
    <property type="nucleotide sequence ID" value="NC_001263.1"/>
</dbReference>
<dbReference type="SMR" id="Q9RRE4"/>
<dbReference type="FunCoup" id="Q9RRE4">
    <property type="interactions" value="414"/>
</dbReference>
<dbReference type="STRING" id="243230.DR_2548"/>
<dbReference type="PaxDb" id="243230-DR_2548"/>
<dbReference type="EnsemblBacteria" id="AAF12089">
    <property type="protein sequence ID" value="AAF12089"/>
    <property type="gene ID" value="DR_2548"/>
</dbReference>
<dbReference type="GeneID" id="69518800"/>
<dbReference type="KEGG" id="dra:DR_2548"/>
<dbReference type="PATRIC" id="fig|243230.17.peg.2791"/>
<dbReference type="eggNOG" id="COG0217">
    <property type="taxonomic scope" value="Bacteria"/>
</dbReference>
<dbReference type="HOGENOM" id="CLU_062974_2_2_0"/>
<dbReference type="InParanoid" id="Q9RRE4"/>
<dbReference type="OrthoDB" id="9781053at2"/>
<dbReference type="Proteomes" id="UP000002524">
    <property type="component" value="Chromosome 1"/>
</dbReference>
<dbReference type="GO" id="GO:0005829">
    <property type="term" value="C:cytosol"/>
    <property type="evidence" value="ECO:0000318"/>
    <property type="project" value="GO_Central"/>
</dbReference>
<dbReference type="GO" id="GO:0003677">
    <property type="term" value="F:DNA binding"/>
    <property type="evidence" value="ECO:0007669"/>
    <property type="project" value="UniProtKB-UniRule"/>
</dbReference>
<dbReference type="GO" id="GO:0006355">
    <property type="term" value="P:regulation of DNA-templated transcription"/>
    <property type="evidence" value="ECO:0007669"/>
    <property type="project" value="UniProtKB-UniRule"/>
</dbReference>
<dbReference type="FunFam" id="1.10.10.200:FF:000002">
    <property type="entry name" value="Probable transcriptional regulatory protein CLM62_37755"/>
    <property type="match status" value="1"/>
</dbReference>
<dbReference type="FunFam" id="3.30.70.980:FF:000002">
    <property type="entry name" value="Probable transcriptional regulatory protein YebC"/>
    <property type="match status" value="1"/>
</dbReference>
<dbReference type="Gene3D" id="1.10.10.200">
    <property type="match status" value="1"/>
</dbReference>
<dbReference type="Gene3D" id="3.30.70.980">
    <property type="match status" value="2"/>
</dbReference>
<dbReference type="HAMAP" id="MF_00693">
    <property type="entry name" value="Transcrip_reg_TACO1"/>
    <property type="match status" value="1"/>
</dbReference>
<dbReference type="InterPro" id="IPR017856">
    <property type="entry name" value="Integrase-like_N"/>
</dbReference>
<dbReference type="InterPro" id="IPR048300">
    <property type="entry name" value="TACO1_YebC-like_2nd/3rd_dom"/>
</dbReference>
<dbReference type="InterPro" id="IPR049083">
    <property type="entry name" value="TACO1_YebC_N"/>
</dbReference>
<dbReference type="InterPro" id="IPR002876">
    <property type="entry name" value="Transcrip_reg_TACO1-like"/>
</dbReference>
<dbReference type="InterPro" id="IPR026564">
    <property type="entry name" value="Transcrip_reg_TACO1-like_dom3"/>
</dbReference>
<dbReference type="InterPro" id="IPR029072">
    <property type="entry name" value="YebC-like"/>
</dbReference>
<dbReference type="NCBIfam" id="NF001030">
    <property type="entry name" value="PRK00110.1"/>
    <property type="match status" value="1"/>
</dbReference>
<dbReference type="NCBIfam" id="NF009044">
    <property type="entry name" value="PRK12378.1"/>
    <property type="match status" value="1"/>
</dbReference>
<dbReference type="NCBIfam" id="TIGR01033">
    <property type="entry name" value="YebC/PmpR family DNA-binding transcriptional regulator"/>
    <property type="match status" value="1"/>
</dbReference>
<dbReference type="PANTHER" id="PTHR12532:SF6">
    <property type="entry name" value="TRANSCRIPTIONAL REGULATORY PROTEIN YEBC-RELATED"/>
    <property type="match status" value="1"/>
</dbReference>
<dbReference type="PANTHER" id="PTHR12532">
    <property type="entry name" value="TRANSLATIONAL ACTIVATOR OF CYTOCHROME C OXIDASE 1"/>
    <property type="match status" value="1"/>
</dbReference>
<dbReference type="Pfam" id="PF20772">
    <property type="entry name" value="TACO1_YebC_N"/>
    <property type="match status" value="1"/>
</dbReference>
<dbReference type="Pfam" id="PF01709">
    <property type="entry name" value="Transcrip_reg"/>
    <property type="match status" value="1"/>
</dbReference>
<dbReference type="SUPFAM" id="SSF75625">
    <property type="entry name" value="YebC-like"/>
    <property type="match status" value="1"/>
</dbReference>
<protein>
    <recommendedName>
        <fullName evidence="1">Probable transcriptional regulatory protein DR_2548</fullName>
    </recommendedName>
</protein>
<keyword id="KW-0963">Cytoplasm</keyword>
<keyword id="KW-0238">DNA-binding</keyword>
<keyword id="KW-1185">Reference proteome</keyword>
<keyword id="KW-0804">Transcription</keyword>
<keyword id="KW-0805">Transcription regulation</keyword>
<evidence type="ECO:0000255" key="1">
    <source>
        <dbReference type="HAMAP-Rule" id="MF_00693"/>
    </source>
</evidence>
<evidence type="ECO:0000256" key="2">
    <source>
        <dbReference type="SAM" id="MobiDB-lite"/>
    </source>
</evidence>
<gene>
    <name type="ordered locus">DR_2548</name>
</gene>